<comment type="function">
    <text evidence="5 21">May serve an important special function either in the mature palmar and plantar skin tissue or in the morphogenetic program of the formation of these tissues. Plays a role in keratin filament assembly.</text>
</comment>
<comment type="subunit">
    <text>Heterotetramer of two type I and two type II keratins.</text>
</comment>
<comment type="tissue specificity">
    <text evidence="21">Expressed in the terminally differentiated epidermis of palms and soles.</text>
</comment>
<comment type="induction">
    <text evidence="4">Induced by intrinsic regulatory mechanisms and by extrinsic signals from a subset of dermal palmoplantar fibroblasts.</text>
</comment>
<comment type="disease" evidence="6 7 8 9 10 11 12 13 14 15 16 17 18 19 20 22 23 24 25 26 27 28 29">
    <disease id="DI-00893">
        <name>Palmoplantar keratoderma, epidermolytic, 1</name>
        <acronym>EPPK1</acronym>
        <description>A form of epidermolytic palmoplantar keratoderma, a dermatological disorder characterized by diffuse thickening of the epidermis on the entire surface of palms and soles sharply bordered with erythematous margins. Some patients may present knuckle pads, thick pads of skin appearing over the proximal phalangeal joints. EPPK1 inheritance is autosomal dominant.</description>
        <dbReference type="MIM" id="144200"/>
    </disease>
    <text>The disease is caused by variants affecting the gene represented in this entry.</text>
</comment>
<comment type="miscellaneous">
    <text>There are two types of cytoskeletal and microfibrillar keratin, I (acidic) and II (neutral to basic) (40-55 and 56-70 kDa, respectively).</text>
</comment>
<comment type="similarity">
    <text evidence="2">Belongs to the intermediate filament family.</text>
</comment>
<comment type="caution">
    <text evidence="31">Was originally thought to be a 60 kDa chain of placental scatter protein.</text>
</comment>
<accession>P35527</accession>
<accession>O00109</accession>
<accession>Q0IJ47</accession>
<accession>Q14665</accession>
<dbReference type="EMBL" id="Z29074">
    <property type="protein sequence ID" value="CAA82315.1"/>
    <property type="molecule type" value="mRNA"/>
</dbReference>
<dbReference type="EMBL" id="S69510">
    <property type="protein sequence ID" value="AAC60619.1"/>
    <property type="molecule type" value="mRNA"/>
</dbReference>
<dbReference type="EMBL" id="X75015">
    <property type="protein sequence ID" value="CAA52924.1"/>
    <property type="molecule type" value="Genomic_DNA"/>
</dbReference>
<dbReference type="EMBL" id="AC019349">
    <property type="status" value="NOT_ANNOTATED_CDS"/>
    <property type="molecule type" value="Genomic_DNA"/>
</dbReference>
<dbReference type="EMBL" id="AB001594">
    <property type="protein sequence ID" value="BAA19418.1"/>
    <property type="molecule type" value="mRNA"/>
</dbReference>
<dbReference type="EMBL" id="BC121170">
    <property type="protein sequence ID" value="AAI21171.1"/>
    <property type="molecule type" value="mRNA"/>
</dbReference>
<dbReference type="CCDS" id="CCDS32654.1"/>
<dbReference type="PIR" id="I37984">
    <property type="entry name" value="I37984"/>
</dbReference>
<dbReference type="RefSeq" id="NP_000217.2">
    <property type="nucleotide sequence ID" value="NM_000226.4"/>
</dbReference>
<dbReference type="SMR" id="P35527"/>
<dbReference type="BioGRID" id="110055">
    <property type="interactions" value="171"/>
</dbReference>
<dbReference type="CORUM" id="P35527"/>
<dbReference type="FunCoup" id="P35527">
    <property type="interactions" value="396"/>
</dbReference>
<dbReference type="IntAct" id="P35527">
    <property type="interactions" value="47"/>
</dbReference>
<dbReference type="MINT" id="P35527"/>
<dbReference type="STRING" id="9606.ENSP00000246662"/>
<dbReference type="DrugBank" id="DB09130">
    <property type="generic name" value="Copper"/>
</dbReference>
<dbReference type="DrugBank" id="DB01593">
    <property type="generic name" value="Zinc"/>
</dbReference>
<dbReference type="DrugBank" id="DB14487">
    <property type="generic name" value="Zinc acetate"/>
</dbReference>
<dbReference type="DrugBank" id="DB14533">
    <property type="generic name" value="Zinc chloride"/>
</dbReference>
<dbReference type="DrugBank" id="DB14548">
    <property type="generic name" value="Zinc sulfate, unspecified form"/>
</dbReference>
<dbReference type="GlyConnect" id="1951">
    <property type="glycosylation" value="12 N-Linked glycans (2 sites)"/>
</dbReference>
<dbReference type="GlyCosmos" id="P35527">
    <property type="glycosylation" value="2 sites, 12 glycans"/>
</dbReference>
<dbReference type="GlyGen" id="P35527">
    <property type="glycosylation" value="4 sites, 12 N-linked glycans (2 sites), 1 O-linked glycan (2 sites)"/>
</dbReference>
<dbReference type="iPTMnet" id="P35527"/>
<dbReference type="PhosphoSitePlus" id="P35527"/>
<dbReference type="SwissPalm" id="P35527"/>
<dbReference type="BioMuta" id="KRT9"/>
<dbReference type="DMDM" id="239938886"/>
<dbReference type="jPOST" id="P35527"/>
<dbReference type="MassIVE" id="P35527"/>
<dbReference type="PaxDb" id="9606-ENSP00000246662"/>
<dbReference type="PeptideAtlas" id="P35527"/>
<dbReference type="PRIDE" id="P35527"/>
<dbReference type="ProteomicsDB" id="55077"/>
<dbReference type="TopDownProteomics" id="P35527"/>
<dbReference type="Antibodypedia" id="1544">
    <property type="antibodies" value="213 antibodies from 28 providers"/>
</dbReference>
<dbReference type="DNASU" id="3857"/>
<dbReference type="Ensembl" id="ENST00000246662.9">
    <property type="protein sequence ID" value="ENSP00000246662.4"/>
    <property type="gene ID" value="ENSG00000171403.10"/>
</dbReference>
<dbReference type="GeneID" id="3857"/>
<dbReference type="KEGG" id="hsa:3857"/>
<dbReference type="MANE-Select" id="ENST00000246662.9">
    <property type="protein sequence ID" value="ENSP00000246662.4"/>
    <property type="RefSeq nucleotide sequence ID" value="NM_000226.4"/>
    <property type="RefSeq protein sequence ID" value="NP_000217.2"/>
</dbReference>
<dbReference type="UCSC" id="uc002hxe.5">
    <property type="organism name" value="human"/>
</dbReference>
<dbReference type="AGR" id="HGNC:6447"/>
<dbReference type="CTD" id="3857"/>
<dbReference type="DisGeNET" id="3857"/>
<dbReference type="GeneCards" id="KRT9"/>
<dbReference type="HGNC" id="HGNC:6447">
    <property type="gene designation" value="KRT9"/>
</dbReference>
<dbReference type="HPA" id="ENSG00000171403">
    <property type="expression patterns" value="Tissue enriched (lymphoid)"/>
</dbReference>
<dbReference type="MalaCards" id="KRT9"/>
<dbReference type="MIM" id="144200">
    <property type="type" value="phenotype"/>
</dbReference>
<dbReference type="MIM" id="149100">
    <property type="type" value="phenotype"/>
</dbReference>
<dbReference type="MIM" id="607606">
    <property type="type" value="gene"/>
</dbReference>
<dbReference type="neXtProt" id="NX_P35527"/>
<dbReference type="OpenTargets" id="ENSG00000171403"/>
<dbReference type="Orphanet" id="2199">
    <property type="disease" value="Epidermolytic palmoplantar keratoderma"/>
</dbReference>
<dbReference type="PharmGKB" id="PA30235"/>
<dbReference type="VEuPathDB" id="HostDB:ENSG00000171403"/>
<dbReference type="eggNOG" id="ENOG502QTM6">
    <property type="taxonomic scope" value="Eukaryota"/>
</dbReference>
<dbReference type="GeneTree" id="ENSGT00940000162894"/>
<dbReference type="HOGENOM" id="CLU_012560_8_3_1"/>
<dbReference type="InParanoid" id="P35527"/>
<dbReference type="OMA" id="HQEEMSQ"/>
<dbReference type="OrthoDB" id="2441647at2759"/>
<dbReference type="PAN-GO" id="P35527">
    <property type="GO annotations" value="4 GO annotations based on evolutionary models"/>
</dbReference>
<dbReference type="PhylomeDB" id="P35527"/>
<dbReference type="TreeFam" id="TF332742"/>
<dbReference type="PathwayCommons" id="P35527"/>
<dbReference type="Reactome" id="R-HSA-6805567">
    <property type="pathway name" value="Keratinization"/>
</dbReference>
<dbReference type="Reactome" id="R-HSA-6809371">
    <property type="pathway name" value="Formation of the cornified envelope"/>
</dbReference>
<dbReference type="SignaLink" id="P35527"/>
<dbReference type="BioGRID-ORCS" id="3857">
    <property type="hits" value="9 hits in 1141 CRISPR screens"/>
</dbReference>
<dbReference type="GeneWiki" id="Keratin_9"/>
<dbReference type="GenomeRNAi" id="3857"/>
<dbReference type="Pharos" id="P35527">
    <property type="development level" value="Tbio"/>
</dbReference>
<dbReference type="PRO" id="PR:P35527"/>
<dbReference type="Proteomes" id="UP000005640">
    <property type="component" value="Chromosome 17"/>
</dbReference>
<dbReference type="RNAct" id="P35527">
    <property type="molecule type" value="protein"/>
</dbReference>
<dbReference type="Bgee" id="ENSG00000171403">
    <property type="expression patterns" value="Expressed in male germ line stem cell (sensu Vertebrata) in testis and 54 other cell types or tissues"/>
</dbReference>
<dbReference type="ExpressionAtlas" id="P35527">
    <property type="expression patterns" value="baseline and differential"/>
</dbReference>
<dbReference type="GO" id="GO:0005856">
    <property type="term" value="C:cytoskeleton"/>
    <property type="evidence" value="ECO:0000318"/>
    <property type="project" value="GO_Central"/>
</dbReference>
<dbReference type="GO" id="GO:0005829">
    <property type="term" value="C:cytosol"/>
    <property type="evidence" value="ECO:0000304"/>
    <property type="project" value="Reactome"/>
</dbReference>
<dbReference type="GO" id="GO:0070062">
    <property type="term" value="C:extracellular exosome"/>
    <property type="evidence" value="ECO:0007005"/>
    <property type="project" value="UniProtKB"/>
</dbReference>
<dbReference type="GO" id="GO:0005615">
    <property type="term" value="C:extracellular space"/>
    <property type="evidence" value="ECO:0007005"/>
    <property type="project" value="UniProtKB"/>
</dbReference>
<dbReference type="GO" id="GO:0045095">
    <property type="term" value="C:keratin filament"/>
    <property type="evidence" value="ECO:0000318"/>
    <property type="project" value="GO_Central"/>
</dbReference>
<dbReference type="GO" id="GO:0016020">
    <property type="term" value="C:membrane"/>
    <property type="evidence" value="ECO:0007005"/>
    <property type="project" value="UniProtKB"/>
</dbReference>
<dbReference type="GO" id="GO:0005634">
    <property type="term" value="C:nucleus"/>
    <property type="evidence" value="ECO:0007005"/>
    <property type="project" value="UniProtKB"/>
</dbReference>
<dbReference type="GO" id="GO:0005200">
    <property type="term" value="F:structural constituent of cytoskeleton"/>
    <property type="evidence" value="ECO:0000304"/>
    <property type="project" value="ProtInc"/>
</dbReference>
<dbReference type="GO" id="GO:0008544">
    <property type="term" value="P:epidermis development"/>
    <property type="evidence" value="ECO:0000304"/>
    <property type="project" value="ProtInc"/>
</dbReference>
<dbReference type="GO" id="GO:0030855">
    <property type="term" value="P:epithelial cell differentiation"/>
    <property type="evidence" value="ECO:0000318"/>
    <property type="project" value="GO_Central"/>
</dbReference>
<dbReference type="GO" id="GO:0045109">
    <property type="term" value="P:intermediate filament organization"/>
    <property type="evidence" value="ECO:0000315"/>
    <property type="project" value="UniProtKB"/>
</dbReference>
<dbReference type="GO" id="GO:0043588">
    <property type="term" value="P:skin development"/>
    <property type="evidence" value="ECO:0000314"/>
    <property type="project" value="UniProtKB"/>
</dbReference>
<dbReference type="GO" id="GO:0007283">
    <property type="term" value="P:spermatogenesis"/>
    <property type="evidence" value="ECO:0007669"/>
    <property type="project" value="Ensembl"/>
</dbReference>
<dbReference type="FunFam" id="1.20.5.1160:FF:000002">
    <property type="entry name" value="Type I keratin 10"/>
    <property type="match status" value="1"/>
</dbReference>
<dbReference type="FunFam" id="1.20.5.170:FF:000002">
    <property type="entry name" value="Type I keratin KA11"/>
    <property type="match status" value="1"/>
</dbReference>
<dbReference type="FunFam" id="1.20.5.500:FF:000001">
    <property type="entry name" value="Type II keratin 23"/>
    <property type="match status" value="1"/>
</dbReference>
<dbReference type="Gene3D" id="1.20.5.170">
    <property type="match status" value="1"/>
</dbReference>
<dbReference type="Gene3D" id="1.20.5.500">
    <property type="entry name" value="Single helix bin"/>
    <property type="match status" value="1"/>
</dbReference>
<dbReference type="Gene3D" id="1.20.5.1160">
    <property type="entry name" value="Vasodilator-stimulated phosphoprotein"/>
    <property type="match status" value="1"/>
</dbReference>
<dbReference type="InterPro" id="IPR018039">
    <property type="entry name" value="IF_conserved"/>
</dbReference>
<dbReference type="InterPro" id="IPR039008">
    <property type="entry name" value="IF_rod_dom"/>
</dbReference>
<dbReference type="InterPro" id="IPR002957">
    <property type="entry name" value="Keratin_I"/>
</dbReference>
<dbReference type="PANTHER" id="PTHR23239">
    <property type="entry name" value="INTERMEDIATE FILAMENT"/>
    <property type="match status" value="1"/>
</dbReference>
<dbReference type="PANTHER" id="PTHR23239:SF96">
    <property type="entry name" value="KERATIN, TYPE I CYTOSKELETAL 9"/>
    <property type="match status" value="1"/>
</dbReference>
<dbReference type="Pfam" id="PF00038">
    <property type="entry name" value="Filament"/>
    <property type="match status" value="1"/>
</dbReference>
<dbReference type="PRINTS" id="PR01248">
    <property type="entry name" value="TYPE1KERATIN"/>
</dbReference>
<dbReference type="SMART" id="SM01391">
    <property type="entry name" value="Filament"/>
    <property type="match status" value="1"/>
</dbReference>
<dbReference type="SUPFAM" id="SSF64593">
    <property type="entry name" value="Intermediate filament protein, coiled coil region"/>
    <property type="match status" value="2"/>
</dbReference>
<dbReference type="PROSITE" id="PS00226">
    <property type="entry name" value="IF_ROD_1"/>
    <property type="match status" value="1"/>
</dbReference>
<dbReference type="PROSITE" id="PS51842">
    <property type="entry name" value="IF_ROD_2"/>
    <property type="match status" value="1"/>
</dbReference>
<keyword id="KW-0175">Coiled coil</keyword>
<keyword id="KW-0903">Direct protein sequencing</keyword>
<keyword id="KW-0225">Disease variant</keyword>
<keyword id="KW-0403">Intermediate filament</keyword>
<keyword id="KW-0416">Keratin</keyword>
<keyword id="KW-1007">Palmoplantar keratoderma</keyword>
<keyword id="KW-0597">Phosphoprotein</keyword>
<keyword id="KW-1267">Proteomics identification</keyword>
<keyword id="KW-1185">Reference proteome</keyword>
<sequence>MSCRQFSSSYLSRSGGGGGGGLGSGGSIRSSYSRFSSSGGGGGGGRFSSSSGYGGGSSRVCGRGGGGSFGYSYGGGSGGGFSASSLGGGFGGGSRGFGGASGGGYSSSGGFGGGFGGGSGGGFGGGYGSGFGGFGGFGGGAGGGDGGILTANEKSTMQELNSRLASYLDKVQALEEANNDLENKIQDWYDKKGPAAIQKNYSPYYNTIDDLKDQIVDLTVGNNKTLLDIDNTRMTLDDFRIKFEMEQNLRQGVDADINGLRQVLDNLTMEKSDLEMQYETLQEELMALKKNHKEEMSQLTGQNSGDVNVEINVAPGKDLTKTLNDMRQEYEQLIAKNRKDIENQYETQITQIEHEVSSSGQEVQSSAKEVTQLRHGVQELEIELQSQLSKKAALEKSLEDTKNRYCGQLQMIQEQISNLEAQITDVRQEIECQNQEYSLLLSIKMRLEKEIETYHNLLEGGQEDFESSGAGKIGLGGRGGSGGSYGRGSRGGSGGSYGGGGSGGGYGGGSGSRGGSGGSYGGGSGSGGGSGGGYGGGSGGGHSGGSGGGHSGGSGGNYGGGSGSGGGSGGGYGGGSGSRGGSGGSHGGGSGFGGESGGSYGGGEEASGSGGGYGGGSGKSSHS</sequence>
<proteinExistence type="evidence at protein level"/>
<reference key="1">
    <citation type="journal article" date="1993" name="Differentiation">
        <title>Molecular characterization of the body site-specific human epidermal cytokeratin 9: cDNA cloning, amino acid sequence, and tissue specificity of gene expression.</title>
        <authorList>
            <person name="Langbein L."/>
            <person name="Heid H.W."/>
            <person name="Moll I."/>
            <person name="Franke W.W."/>
        </authorList>
    </citation>
    <scope>NUCLEOTIDE SEQUENCE [MRNA]</scope>
    <scope>PARTIAL PROTEIN SEQUENCE</scope>
    <scope>FUNCTION</scope>
    <scope>TISSUE SPECIFICITY</scope>
    <source>
        <tissue>Foot sole tissue</tissue>
    </source>
</reference>
<reference key="2">
    <citation type="journal article" date="1994" name="Nat. Genet.">
        <title>Keratin 9 gene mutations in epidermolytic palmoplantar keratoderma (EPPK).</title>
        <authorList>
            <person name="Reis A."/>
            <person name="Hennies H.-C."/>
            <person name="Langbein L."/>
            <person name="Digweed M."/>
            <person name="Mischke D."/>
            <person name="Dreschler M."/>
            <person name="Schroek E."/>
            <person name="Royer-Pokora B."/>
            <person name="Franke W.W."/>
            <person name="Sperling K."/>
            <person name="Kuester W."/>
        </authorList>
    </citation>
    <scope>NUCLEOTIDE SEQUENCE [GENOMIC DNA]</scope>
    <scope>VARIANTS EPPK1 LYS-161; GLN-163 AND TRP-163</scope>
</reference>
<reference key="3">
    <citation type="journal article" date="2006" name="Nature">
        <title>DNA sequence of human chromosome 17 and analysis of rearrangement in the human lineage.</title>
        <authorList>
            <person name="Zody M.C."/>
            <person name="Garber M."/>
            <person name="Adams D.J."/>
            <person name="Sharpe T."/>
            <person name="Harrow J."/>
            <person name="Lupski J.R."/>
            <person name="Nicholson C."/>
            <person name="Searle S.M."/>
            <person name="Wilming L."/>
            <person name="Young S.K."/>
            <person name="Abouelleil A."/>
            <person name="Allen N.R."/>
            <person name="Bi W."/>
            <person name="Bloom T."/>
            <person name="Borowsky M.L."/>
            <person name="Bugalter B.E."/>
            <person name="Butler J."/>
            <person name="Chang J.L."/>
            <person name="Chen C.-K."/>
            <person name="Cook A."/>
            <person name="Corum B."/>
            <person name="Cuomo C.A."/>
            <person name="de Jong P.J."/>
            <person name="DeCaprio D."/>
            <person name="Dewar K."/>
            <person name="FitzGerald M."/>
            <person name="Gilbert J."/>
            <person name="Gibson R."/>
            <person name="Gnerre S."/>
            <person name="Goldstein S."/>
            <person name="Grafham D.V."/>
            <person name="Grocock R."/>
            <person name="Hafez N."/>
            <person name="Hagopian D.S."/>
            <person name="Hart E."/>
            <person name="Norman C.H."/>
            <person name="Humphray S."/>
            <person name="Jaffe D.B."/>
            <person name="Jones M."/>
            <person name="Kamal M."/>
            <person name="Khodiyar V.K."/>
            <person name="LaButti K."/>
            <person name="Laird G."/>
            <person name="Lehoczky J."/>
            <person name="Liu X."/>
            <person name="Lokyitsang T."/>
            <person name="Loveland J."/>
            <person name="Lui A."/>
            <person name="Macdonald P."/>
            <person name="Major J.E."/>
            <person name="Matthews L."/>
            <person name="Mauceli E."/>
            <person name="McCarroll S.A."/>
            <person name="Mihalev A.H."/>
            <person name="Mudge J."/>
            <person name="Nguyen C."/>
            <person name="Nicol R."/>
            <person name="O'Leary S.B."/>
            <person name="Osoegawa K."/>
            <person name="Schwartz D.C."/>
            <person name="Shaw-Smith C."/>
            <person name="Stankiewicz P."/>
            <person name="Steward C."/>
            <person name="Swarbreck D."/>
            <person name="Venkataraman V."/>
            <person name="Whittaker C.A."/>
            <person name="Yang X."/>
            <person name="Zimmer A.R."/>
            <person name="Bradley A."/>
            <person name="Hubbard T."/>
            <person name="Birren B.W."/>
            <person name="Rogers J."/>
            <person name="Lander E.S."/>
            <person name="Nusbaum C."/>
        </authorList>
    </citation>
    <scope>NUCLEOTIDE SEQUENCE [LARGE SCALE GENOMIC DNA]</scope>
</reference>
<reference key="4">
    <citation type="submission" date="2005-08" db="UniProtKB">
        <authorList>
            <person name="Bienvenut W.V."/>
        </authorList>
    </citation>
    <scope>PROTEIN SEQUENCE OF 14-29</scope>
    <scope>IDENTIFICATION BY MASS SPECTROMETRY</scope>
    <source>
        <tissue>Cervix carcinoma</tissue>
    </source>
</reference>
<reference key="5">
    <citation type="journal article" date="1996" name="FEBS Lett.">
        <title>Keratin 9 point mutation in the pedigree of epidermolytic hereditary palmoplantar keratoderma perturbs keratin intermediate filament network formation.</title>
        <authorList>
            <person name="Kobayashi S."/>
            <person name="Tanaka T."/>
            <person name="Matsuyoshi N."/>
            <person name="Imamura S."/>
        </authorList>
    </citation>
    <scope>NUCLEOTIDE SEQUENCE [MRNA] OF 147-372</scope>
    <scope>VARIANT EPPK1 GLN-163</scope>
</reference>
<reference key="6">
    <citation type="journal article" date="2004" name="Genome Res.">
        <title>The status, quality, and expansion of the NIH full-length cDNA project: the Mammalian Gene Collection (MGC).</title>
        <authorList>
            <consortium name="The MGC Project Team"/>
        </authorList>
    </citation>
    <scope>NUCLEOTIDE SEQUENCE [LARGE SCALE MRNA] OF 157-623</scope>
</reference>
<reference key="7">
    <citation type="journal article" date="1990" name="Biochem. Biophys. Res. Commun.">
        <title>Human placenta contains an epithelial scatter protein.</title>
        <authorList>
            <person name="Rosen E.M."/>
            <person name="Meromsky L."/>
            <person name="Romero R."/>
            <person name="Setter E."/>
            <person name="Goldberg I."/>
        </authorList>
    </citation>
    <scope>PROTEIN SEQUENCE OF 450-466</scope>
</reference>
<reference key="8">
    <citation type="journal article" date="1999" name="FEBS Lett.">
        <title>Demonstration of the pathogenic effect of point mutated keratin 9 in vivo.</title>
        <authorList>
            <person name="Kobayashi S."/>
            <person name="Kore-eda S."/>
            <person name="Tanaka T."/>
        </authorList>
    </citation>
    <scope>FUNCTION</scope>
    <scope>MUTAGENESIS OF ARG-163</scope>
</reference>
<reference key="9">
    <citation type="journal article" date="1999" name="J. Invest. Dermatol.">
        <title>Regulation of keratin 9 in nonpalmoplantar keratinocytes by palmoplantar fibroblasts through epithelial-mesenchymal interactions.</title>
        <authorList>
            <person name="Yamaguchi Y."/>
            <person name="Itami S."/>
            <person name="Tarutani M."/>
            <person name="Hosokawa K."/>
            <person name="Miura H."/>
            <person name="Yoshikawa K."/>
        </authorList>
    </citation>
    <scope>INDUCTION</scope>
</reference>
<reference key="10">
    <citation type="journal article" date="2003" name="Nature">
        <title>Proteomic characterization of the human centrosome by protein correlation profiling.</title>
        <authorList>
            <person name="Andersen J.S."/>
            <person name="Wilkinson C.J."/>
            <person name="Mayor T."/>
            <person name="Mortensen P."/>
            <person name="Nigg E.A."/>
            <person name="Mann M."/>
        </authorList>
    </citation>
    <scope>IDENTIFICATION BY MASS SPECTROMETRY</scope>
    <source>
        <tissue>Lymphoblast</tissue>
    </source>
</reference>
<reference key="11">
    <citation type="journal article" date="2008" name="Proc. Natl. Acad. Sci. U.S.A.">
        <title>A quantitative atlas of mitotic phosphorylation.</title>
        <authorList>
            <person name="Dephoure N."/>
            <person name="Zhou C."/>
            <person name="Villen J."/>
            <person name="Beausoleil S.A."/>
            <person name="Bakalarski C.E."/>
            <person name="Elledge S.J."/>
            <person name="Gygi S.P."/>
        </authorList>
    </citation>
    <scope>IDENTIFICATION BY MASS SPECTROMETRY [LARGE SCALE ANALYSIS]</scope>
    <source>
        <tissue>Cervix carcinoma</tissue>
    </source>
</reference>
<reference key="12">
    <citation type="journal article" date="2011" name="BMC Syst. Biol.">
        <title>Initial characterization of the human central proteome.</title>
        <authorList>
            <person name="Burkard T.R."/>
            <person name="Planyavsky M."/>
            <person name="Kaupe I."/>
            <person name="Breitwieser F.P."/>
            <person name="Buerckstuemmer T."/>
            <person name="Bennett K.L."/>
            <person name="Superti-Furga G."/>
            <person name="Colinge J."/>
        </authorList>
    </citation>
    <scope>IDENTIFICATION BY MASS SPECTROMETRY [LARGE SCALE ANALYSIS]</scope>
</reference>
<reference key="13">
    <citation type="journal article" date="2014" name="J. Proteomics">
        <title>An enzyme assisted RP-RPLC approach for in-depth analysis of human liver phosphoproteome.</title>
        <authorList>
            <person name="Bian Y."/>
            <person name="Song C."/>
            <person name="Cheng K."/>
            <person name="Dong M."/>
            <person name="Wang F."/>
            <person name="Huang J."/>
            <person name="Sun D."/>
            <person name="Wang L."/>
            <person name="Ye M."/>
            <person name="Zou H."/>
        </authorList>
    </citation>
    <scope>IDENTIFICATION BY MASS SPECTROMETRY [LARGE SCALE ANALYSIS]</scope>
    <source>
        <tissue>Liver</tissue>
    </source>
</reference>
<reference key="14">
    <citation type="journal article" date="2015" name="Proteomics">
        <title>N-terminome analysis of the human mitochondrial proteome.</title>
        <authorList>
            <person name="Vaca Jacome A.S."/>
            <person name="Rabilloud T."/>
            <person name="Schaeffer-Reiss C."/>
            <person name="Rompais M."/>
            <person name="Ayoub D."/>
            <person name="Lane L."/>
            <person name="Bairoch A."/>
            <person name="Van Dorsselaer A."/>
            <person name="Carapito C."/>
        </authorList>
    </citation>
    <scope>IDENTIFICATION BY MASS SPECTROMETRY [LARGE SCALE ANALYSIS]</scope>
</reference>
<reference key="15">
    <citation type="journal article" date="1994" name="Hum. Genet.">
        <title>Keratin 9 gene mutational heterogeneity in patients with epidermolytic palmoplantar keratoderma.</title>
        <authorList>
            <person name="Hennies H.-C."/>
            <person name="Zehender D."/>
            <person name="Kunze J."/>
            <person name="Kuester W."/>
            <person name="Reis A."/>
        </authorList>
    </citation>
    <scope>VARIANTS EPPK1 VAL-157 AND PRO-172</scope>
</reference>
<reference key="16">
    <citation type="journal article" date="1994" name="J. Invest. Dermatol.">
        <title>Mutations of keratin 9 in two families with palmoplantar epidermolytic hyperkeratosis.</title>
        <authorList>
            <person name="Bonifas J.M."/>
            <person name="Matsumura K."/>
            <person name="Chen M.A."/>
            <person name="Berth-Jones J."/>
            <person name="Hutchinson P.E."/>
            <person name="Zloczower M."/>
            <person name="Fritsch P.O."/>
            <person name="Epstein E.H. Jr."/>
        </authorList>
    </citation>
    <scope>VARIANT EPPK1 SER-161</scope>
</reference>
<reference key="17">
    <citation type="journal article" date="1994" name="Nat. Genet.">
        <title>Epidermolytic palmoplantar keratoderma cosegregates with a keratin 9 mutation in a pedigree with breast and ovarian cancer.</title>
        <authorList>
            <person name="Torchard D."/>
            <person name="Blanchet-Bardon C."/>
            <person name="Serova O."/>
            <person name="Langbein L."/>
            <person name="Narod S."/>
            <person name="Janin N."/>
            <person name="Goguel A.F."/>
            <person name="Bernheim A."/>
            <person name="Franke W.W."/>
            <person name="Lenoir G.M."/>
            <person name="Feunteun J."/>
        </authorList>
    </citation>
    <scope>VARIANT EPPK1 TYR-161</scope>
</reference>
<reference key="18">
    <citation type="journal article" date="1995" name="J. Invest. Dermatol.">
        <title>Mutations in the 1A domain of keratin 9 in patients with epidermolytic palmoplantar keratoderma.</title>
        <authorList>
            <person name="Rothnagel J.A."/>
            <person name="Wojcik S."/>
            <person name="Liefer K.M."/>
            <person name="Dominey A.M."/>
            <person name="Huber M."/>
            <person name="Hohl D."/>
            <person name="Roop D.R."/>
        </authorList>
    </citation>
    <scope>VARIANTS EPPK1 TRP-163 AND SER-168</scope>
</reference>
<reference key="19">
    <citation type="journal article" date="1997" name="J. Invest. Dermatol.">
        <title>A novel mutation of a leucine residue in coil 1A of keratin 9 in epidermolytic palmoplantar keratoderma.</title>
        <authorList>
            <person name="Endo H."/>
            <person name="Hatamochi A."/>
            <person name="Shinkai H."/>
        </authorList>
    </citation>
    <scope>VARIANT EPPK1 VAL-160</scope>
</reference>
<reference key="20">
    <citation type="journal article" date="1998" name="J. Invest. Dermatol.">
        <title>Mutations in keratin K9 in kindreds with epidermolytic palmoplantar keratoderma and epidemiology in Northern Ireland.</title>
        <authorList>
            <person name="Covello S.P."/>
            <person name="Irvine A.D."/>
            <person name="McKenna K.E."/>
            <person name="Munro C.S."/>
            <person name="Nevin N.C."/>
            <person name="Smith F.J.D."/>
            <person name="Uitto J."/>
            <person name="McLean W.H.I."/>
        </authorList>
    </citation>
    <scope>VARIANTS EPPK1 THR-157; VAL-157 AND GLN-163</scope>
</reference>
<reference key="21">
    <citation type="journal article" date="1999" name="Pediatr. Dermatol.">
        <title>Keratin 9 mutations in the coil 1A region in epidermolytic palmoplantar keratoderma.</title>
        <authorList>
            <person name="Szalai S."/>
            <person name="Szalai C."/>
            <person name="Becker K."/>
            <person name="Torok E."/>
        </authorList>
    </citation>
    <scope>VARIANT EPPK1 GLN-163</scope>
</reference>
<reference key="22">
    <citation type="journal article" date="2000" name="Clin. Exp. Dermatol.">
        <title>Epidermolytic palmoplantar keratoderma in a Hispanic kindred resulting from a mutation in the keratin 9 gene.</title>
        <authorList>
            <person name="Warmuth I."/>
            <person name="Cserhalmi-Friedman P.B."/>
            <person name="Schneiderman P."/>
            <person name="Grossman M.E."/>
            <person name="Christiano A.M."/>
        </authorList>
    </citation>
    <scope>VARIANT EPPK1 TRP-163</scope>
</reference>
<reference key="23">
    <citation type="journal article" date="2002" name="Arch. Dermatol. Res.">
        <title>Epidermolytic palmoplantar keratoderma of Vorner: re-evaluation of Vorner's original family and identification of a novel keratin 9 mutation.</title>
        <authorList>
            <person name="Kuster W."/>
            <person name="Reis A."/>
            <person name="Hennies H.C."/>
        </authorList>
    </citation>
    <scope>VARIANT EPPK1 ILE-161</scope>
</reference>
<reference key="24">
    <citation type="journal article" date="2002" name="Br. J. Dermatol.">
        <title>Diagnosis and confirmation of epidermolytic palmoplantar keratoderma by the identification of mutations in keratin 9 using denaturing high-performance liquid chromatography.</title>
        <authorList>
            <person name="Rugg E.L."/>
            <person name="Common J.E."/>
            <person name="Wilgoss A."/>
            <person name="Stevens H.P."/>
            <person name="Buchan J."/>
            <person name="Leigh I.M."/>
            <person name="Kelsell D.P."/>
        </authorList>
    </citation>
    <scope>VARIANTS EPPK1 VAL-157; TRP-163; GLN-163 AND MET-171</scope>
</reference>
<reference key="25">
    <citation type="journal article" date="2003" name="Acta Derm. Venereol.">
        <title>Novel N160I mutation of keratin 9 in a large pedigree from Hungary with epidermolytic palmoplantar keratoderma.</title>
        <authorList>
            <person name="Csikos M."/>
            <person name="Hollo P."/>
            <person name="Becker K."/>
            <person name="Racz E."/>
            <person name="Horvath A."/>
            <person name="Karpati S."/>
        </authorList>
    </citation>
    <scope>VARIANT EPPK1 ILE-161</scope>
</reference>
<reference key="26">
    <citation type="journal article" date="2003" name="Am. J. Med. Genet. A">
        <title>A novel mutation of keratin 9 in epidermolytic palmoplantar keratoderma combined with knuckle pads.</title>
        <authorList>
            <person name="Lu Y."/>
            <person name="Guo C."/>
            <person name="Liu Q."/>
            <person name="Zhang X."/>
            <person name="Cheng L."/>
            <person name="Li J."/>
            <person name="Chen B."/>
            <person name="Gao G."/>
            <person name="Zhou H."/>
            <person name="Guo Y."/>
            <person name="Li Y."/>
            <person name="Gong Y."/>
        </authorList>
    </citation>
    <scope>VARIANT EPPK1 PHE-160</scope>
</reference>
<reference key="27">
    <citation type="journal article" date="2003" name="Exp. Dermatol.">
        <title>Keratin 9 gene mutations in five Korean families with epidermolytic palmoplantar keratoderma.</title>
        <authorList>
            <person name="Lee J.-H."/>
            <person name="Ahn K.-S."/>
            <person name="Lee C.-H."/>
            <person name="Youn S.-J."/>
            <person name="Kim J.-W."/>
            <person name="Lee D.-Y."/>
            <person name="Lee E.-S."/>
            <person name="Steinert P.M."/>
            <person name="Yang J.-M."/>
        </authorList>
    </citation>
    <scope>VARIANTS EPPK1 HIS-161; SER-161 AND TRP-163</scope>
</reference>
<reference key="28">
    <citation type="journal article" date="2004" name="Br. J. Dermatol.">
        <title>A novel mutation of keratin 9 in a large Chinese family with epidermolytic palmoplantar keratoderma.</title>
        <authorList>
            <person name="He X.-H."/>
            <person name="Zhang X.-N."/>
            <person name="Mao W."/>
            <person name="Chen H.-P."/>
            <person name="Xu L.-R."/>
            <person name="Chen H."/>
            <person name="He X.-L."/>
            <person name="Le Y.-P."/>
        </authorList>
    </citation>
    <scope>VARIANT EPPK1 TYR-167 DELINS TRP-LEU</scope>
</reference>
<reference key="29">
    <citation type="journal article" date="2004" name="Clin. Exp. Dermatol.">
        <title>A novel keratin 9 gene mutation (Asn160His) in a Taiwanese family with epidermolytic palmoplantar keratoderma.</title>
        <authorList>
            <person name="Lin J.-H."/>
            <person name="Lin M.-H."/>
            <person name="Yang M.-H."/>
            <person name="Chao S.-C."/>
        </authorList>
    </citation>
    <scope>VARIANT EPPK1 HIS-161</scope>
</reference>
<reference key="30">
    <citation type="journal article" date="2005" name="Arch. Dermatol. Res.">
        <title>A novel mutation of keratin 9 gene (R162P) in a Japanese family with epidermolytic palmoplantar keratoderma.</title>
        <authorList>
            <person name="Kon A."/>
            <person name="Itagaki K."/>
            <person name="Yoneda K."/>
            <person name="Takagaki K."/>
        </authorList>
    </citation>
    <scope>VARIANT EPPK1 PRO-163</scope>
</reference>
<reference key="31">
    <citation type="journal article" date="2006" name="Br. J. Dermatol.">
        <title>L457F missense mutation within the 2B rod domain of keratin 9 in a Japanese family with epidermolytic palmoplantar keratoderma.</title>
        <authorList>
            <person name="Kon A."/>
            <person name="Ito N."/>
            <person name="Kudo Y."/>
            <person name="Nomura K."/>
            <person name="Yoneda K."/>
            <person name="Hanada K."/>
            <person name="Hashimoto I."/>
            <person name="Takagaki K."/>
        </authorList>
    </citation>
    <scope>VARIANT EPPK1 PHE-458</scope>
</reference>
<reference key="32">
    <citation type="journal article" date="2006" name="Int. J. Dermatol.">
        <title>A novel keratin 9 gene mutation (Met156Arg) in a Japanese patient with epidermolytic palmoplantar keratoderma.</title>
        <authorList>
            <person name="Shimazu K."/>
            <person name="Tsunemi Y."/>
            <person name="Hattori N."/>
            <person name="Saeki H."/>
            <person name="Komine M."/>
            <person name="Adachi M."/>
            <person name="Tamaki K."/>
        </authorList>
    </citation>
    <scope>VARIANT EPPK1 ARG-157</scope>
</reference>
<reference key="33">
    <citation type="journal article" date="2010" name="Clin. Exp. Dermatol.">
        <title>Mutations in the keratin 9 gene in Pakistani families with epidermolytic palmoplantar keratoderma.</title>
        <authorList>
            <person name="Shimomura Y."/>
            <person name="Wajid M."/>
            <person name="Weiser J."/>
            <person name="Kraemer L."/>
            <person name="Christiano A.M."/>
        </authorList>
    </citation>
    <scope>VARIANTS EPPK1 LYS-157; THR-157; GLN-163 AND HIS-454</scope>
</reference>
<reference key="34">
    <citation type="journal article" date="2010" name="Int. J. Dermatol.">
        <title>A novel mutation of the keratin 9 gene in a Chinese family with epidermolytic palmoplantar keratoderma.</title>
        <authorList>
            <person name="Wang K."/>
            <person name="He C.D."/>
            <person name="Song F."/>
            <person name="Liu J."/>
            <person name="Chen H.D."/>
        </authorList>
    </citation>
    <scope>VARIANT EPPK1 ARG-406</scope>
</reference>
<reference key="35">
    <citation type="journal article" date="2011" name="Eur. J. Dermatol.">
        <title>A novel mutation within the 2B rod domain of keratin 9 in a Chinese pedigree with epidermolytic palmoplantar keratoderma combined with knuckle pads and camptodactyly.</title>
        <authorList>
            <person name="Du Z.F."/>
            <person name="Wei W."/>
            <person name="Wang Y.F."/>
            <person name="Chen X.L."/>
            <person name="Chen C.Y."/>
            <person name="Liu W.T."/>
            <person name="Lu J.J."/>
            <person name="Mao L.G."/>
            <person name="Xu C.M."/>
            <person name="Fang H."/>
            <person name="Zhang X.N."/>
        </authorList>
    </citation>
    <scope>VARIANT EPPK1 PRO-458</scope>
</reference>
<protein>
    <recommendedName>
        <fullName>Keratin, type I cytoskeletal 9</fullName>
    </recommendedName>
    <alternativeName>
        <fullName>Cytokeratin-9</fullName>
        <shortName>CK-9</shortName>
    </alternativeName>
    <alternativeName>
        <fullName>Keratin-9</fullName>
        <shortName>K9</shortName>
    </alternativeName>
</protein>
<gene>
    <name type="primary">KRT9</name>
</gene>
<feature type="chain" id="PRO_0000063640" description="Keratin, type I cytoskeletal 9">
    <location>
        <begin position="1"/>
        <end position="623"/>
    </location>
</feature>
<feature type="domain" description="IF rod" evidence="2">
    <location>
        <begin position="153"/>
        <end position="465"/>
    </location>
</feature>
<feature type="region of interest" description="Head">
    <location>
        <begin position="1"/>
        <end position="152"/>
    </location>
</feature>
<feature type="region of interest" description="Disordered" evidence="3">
    <location>
        <begin position="1"/>
        <end position="25"/>
    </location>
</feature>
<feature type="region of interest" description="Coil 1A">
    <location>
        <begin position="153"/>
        <end position="188"/>
    </location>
</feature>
<feature type="region of interest" description="Linker 1">
    <location>
        <begin position="189"/>
        <end position="207"/>
    </location>
</feature>
<feature type="region of interest" description="Coil 1B">
    <location>
        <begin position="208"/>
        <end position="299"/>
    </location>
</feature>
<feature type="region of interest" description="Linker 12">
    <location>
        <begin position="300"/>
        <end position="322"/>
    </location>
</feature>
<feature type="region of interest" description="Coil 2">
    <location>
        <begin position="323"/>
        <end position="461"/>
    </location>
</feature>
<feature type="region of interest" description="Tail">
    <location>
        <begin position="462"/>
        <end position="623"/>
    </location>
</feature>
<feature type="region of interest" description="Disordered" evidence="3">
    <location>
        <begin position="462"/>
        <end position="496"/>
    </location>
</feature>
<feature type="region of interest" description="Disordered" evidence="3">
    <location>
        <begin position="534"/>
        <end position="623"/>
    </location>
</feature>
<feature type="compositionally biased region" description="Low complexity" evidence="3">
    <location>
        <begin position="1"/>
        <end position="13"/>
    </location>
</feature>
<feature type="compositionally biased region" description="Gly residues" evidence="3">
    <location>
        <begin position="14"/>
        <end position="25"/>
    </location>
</feature>
<feature type="compositionally biased region" description="Gly residues" evidence="3">
    <location>
        <begin position="471"/>
        <end position="496"/>
    </location>
</feature>
<feature type="modified residue" description="Phosphoserine" evidence="1">
    <location>
        <position position="14"/>
    </location>
</feature>
<feature type="modified residue" description="Phosphoserine" evidence="1">
    <location>
        <position position="57"/>
    </location>
</feature>
<feature type="sequence variant" id="VAR_071977" description="In EPPK1; dbSNP:rs59510579." evidence="18">
    <original>M</original>
    <variation>K</variation>
    <location>
        <position position="157"/>
    </location>
</feature>
<feature type="sequence variant" id="VAR_036805" description="In EPPK1; dbSNP:rs59510579." evidence="17">
    <original>M</original>
    <variation>R</variation>
    <location>
        <position position="157"/>
    </location>
</feature>
<feature type="sequence variant" id="VAR_010499" description="In EPPK1; dbSNP:rs59510579." evidence="18 29">
    <original>M</original>
    <variation>T</variation>
    <location>
        <position position="157"/>
    </location>
</feature>
<feature type="sequence variant" id="VAR_010500" description="In EPPK1; dbSNP:rs58597584." evidence="8 24 29">
    <original>M</original>
    <variation>V</variation>
    <location>
        <position position="157"/>
    </location>
</feature>
<feature type="sequence variant" id="VAR_035438" description="In EPPK1; dbSNP:rs28940896." evidence="10">
    <original>L</original>
    <variation>F</variation>
    <location>
        <position position="160"/>
    </location>
</feature>
<feature type="sequence variant" id="VAR_010501" description="In EPPK1; dbSNP:rs28940896." evidence="28">
    <original>L</original>
    <variation>V</variation>
    <location>
        <position position="160"/>
    </location>
</feature>
<feature type="sequence variant" id="VAR_036806" description="In EPPK1; dbSNP:rs59296273." evidence="12 14">
    <original>N</original>
    <variation>H</variation>
    <location>
        <position position="161"/>
    </location>
</feature>
<feature type="sequence variant" id="VAR_036807" description="In EPPK1; dbSNP:rs56707768." evidence="9 11">
    <original>N</original>
    <variation>I</variation>
    <location>
        <position position="161"/>
    </location>
</feature>
<feature type="sequence variant" id="VAR_003822" description="In EPPK1; dbSNP:rs57536312." evidence="23">
    <original>N</original>
    <variation>K</variation>
    <location>
        <position position="161"/>
    </location>
</feature>
<feature type="sequence variant" id="VAR_010502" description="In EPPK1; dbSNP:rs56707768." evidence="12 25">
    <original>N</original>
    <variation>S</variation>
    <location>
        <position position="161"/>
    </location>
</feature>
<feature type="sequence variant" id="VAR_010503" description="In EPPK1; dbSNP:rs59296273." evidence="22">
    <original>N</original>
    <variation>Y</variation>
    <location>
        <position position="161"/>
    </location>
</feature>
<feature type="sequence variant" id="VAR_036808" description="In EPPK1; dbSNP:rs57758262." evidence="15">
    <original>R</original>
    <variation>P</variation>
    <location>
        <position position="163"/>
    </location>
</feature>
<feature type="sequence variant" id="VAR_003823" description="In EPPK1; dbSNP:rs57758262." evidence="6 8 18 23 27 29">
    <original>R</original>
    <variation>Q</variation>
    <location>
        <position position="163"/>
    </location>
</feature>
<feature type="sequence variant" id="VAR_003824" description="In EPPK1; dbSNP:rs59616921." evidence="7 8 12 23 26">
    <original>R</original>
    <variation>W</variation>
    <location>
        <position position="163"/>
    </location>
</feature>
<feature type="sequence variant" id="VAR_036809" description="In EPPK1." evidence="13">
    <original>Y</original>
    <variation>WL</variation>
    <location>
        <position position="167"/>
    </location>
</feature>
<feature type="sequence variant" id="VAR_003825" description="In EPPK1; dbSNP:rs61157095." evidence="26">
    <original>L</original>
    <variation>S</variation>
    <location>
        <position position="168"/>
    </location>
</feature>
<feature type="sequence variant" id="VAR_035439" description="In EPPK1; dbSNP:rs57019720." evidence="8">
    <original>V</original>
    <variation>M</variation>
    <location>
        <position position="171"/>
    </location>
</feature>
<feature type="sequence variant" id="VAR_010504" description="In EPPK1; dbSNP:rs59878153." evidence="24">
    <original>Q</original>
    <variation>P</variation>
    <location>
        <position position="172"/>
    </location>
</feature>
<feature type="sequence variant" id="VAR_071978" description="In EPPK1; dbSNP:rs77688767." evidence="19">
    <original>C</original>
    <variation>R</variation>
    <location>
        <position position="406"/>
    </location>
</feature>
<feature type="sequence variant" id="VAR_071979" description="In EPPK1; dbSNP:rs267607420." evidence="18">
    <original>Y</original>
    <variation>H</variation>
    <location>
        <position position="454"/>
    </location>
</feature>
<feature type="sequence variant" id="VAR_036810" description="In EPPK1; dbSNP:rs58120120." evidence="16">
    <original>L</original>
    <variation>F</variation>
    <location>
        <position position="458"/>
    </location>
</feature>
<feature type="sequence variant" id="VAR_071980" description="In EPPK1." evidence="20">
    <original>L</original>
    <variation>P</variation>
    <location>
        <position position="458"/>
    </location>
</feature>
<feature type="mutagenesis site" description="Leads to aggregate formation." evidence="5">
    <original>R</original>
    <variation>QHA</variation>
    <location>
        <position position="163"/>
    </location>
</feature>
<feature type="sequence conflict" description="In Ref. 1; AAC60619 and 2; CAA52924." evidence="30" ref="1 2">
    <original>SR</original>
    <variation>T</variation>
    <location>
        <begin position="12"/>
        <end position="13"/>
    </location>
</feature>
<feature type="sequence conflict" description="In Ref. 1; AAC60619/CAA82315 and 2; CAA52924." evidence="30" ref="1 2">
    <original>G</original>
    <variation>R</variation>
    <location>
        <position position="41"/>
    </location>
</feature>
<feature type="sequence conflict" description="In Ref. 1; AAC60619/CAA82315 and 2; CAA52924." evidence="30" ref="1 2">
    <original>F</original>
    <variation>L</variation>
    <location>
        <position position="134"/>
    </location>
</feature>
<feature type="sequence conflict" description="In Ref. 6; AAI21171." evidence="30" ref="6">
    <original>MQELNSRLASYLDK</original>
    <variation>HLGAGSTPITASQP</variation>
    <location>
        <begin position="157"/>
        <end position="170"/>
    </location>
</feature>
<name>K1C9_HUMAN</name>
<evidence type="ECO:0000250" key="1">
    <source>
        <dbReference type="UniProtKB" id="P13645"/>
    </source>
</evidence>
<evidence type="ECO:0000255" key="2">
    <source>
        <dbReference type="PROSITE-ProRule" id="PRU01188"/>
    </source>
</evidence>
<evidence type="ECO:0000256" key="3">
    <source>
        <dbReference type="SAM" id="MobiDB-lite"/>
    </source>
</evidence>
<evidence type="ECO:0000269" key="4">
    <source>
    </source>
</evidence>
<evidence type="ECO:0000269" key="5">
    <source>
    </source>
</evidence>
<evidence type="ECO:0000269" key="6">
    <source>
    </source>
</evidence>
<evidence type="ECO:0000269" key="7">
    <source>
    </source>
</evidence>
<evidence type="ECO:0000269" key="8">
    <source>
    </source>
</evidence>
<evidence type="ECO:0000269" key="9">
    <source>
    </source>
</evidence>
<evidence type="ECO:0000269" key="10">
    <source>
    </source>
</evidence>
<evidence type="ECO:0000269" key="11">
    <source>
    </source>
</evidence>
<evidence type="ECO:0000269" key="12">
    <source>
    </source>
</evidence>
<evidence type="ECO:0000269" key="13">
    <source>
    </source>
</evidence>
<evidence type="ECO:0000269" key="14">
    <source>
    </source>
</evidence>
<evidence type="ECO:0000269" key="15">
    <source>
    </source>
</evidence>
<evidence type="ECO:0000269" key="16">
    <source>
    </source>
</evidence>
<evidence type="ECO:0000269" key="17">
    <source>
    </source>
</evidence>
<evidence type="ECO:0000269" key="18">
    <source>
    </source>
</evidence>
<evidence type="ECO:0000269" key="19">
    <source>
    </source>
</evidence>
<evidence type="ECO:0000269" key="20">
    <source>
    </source>
</evidence>
<evidence type="ECO:0000269" key="21">
    <source>
    </source>
</evidence>
<evidence type="ECO:0000269" key="22">
    <source>
    </source>
</evidence>
<evidence type="ECO:0000269" key="23">
    <source>
    </source>
</evidence>
<evidence type="ECO:0000269" key="24">
    <source>
    </source>
</evidence>
<evidence type="ECO:0000269" key="25">
    <source>
    </source>
</evidence>
<evidence type="ECO:0000269" key="26">
    <source>
    </source>
</evidence>
<evidence type="ECO:0000269" key="27">
    <source>
    </source>
</evidence>
<evidence type="ECO:0000269" key="28">
    <source>
    </source>
</evidence>
<evidence type="ECO:0000269" key="29">
    <source>
    </source>
</evidence>
<evidence type="ECO:0000305" key="30"/>
<evidence type="ECO:0000305" key="31">
    <source>
    </source>
</evidence>
<organism>
    <name type="scientific">Homo sapiens</name>
    <name type="common">Human</name>
    <dbReference type="NCBI Taxonomy" id="9606"/>
    <lineage>
        <taxon>Eukaryota</taxon>
        <taxon>Metazoa</taxon>
        <taxon>Chordata</taxon>
        <taxon>Craniata</taxon>
        <taxon>Vertebrata</taxon>
        <taxon>Euteleostomi</taxon>
        <taxon>Mammalia</taxon>
        <taxon>Eutheria</taxon>
        <taxon>Euarchontoglires</taxon>
        <taxon>Primates</taxon>
        <taxon>Haplorrhini</taxon>
        <taxon>Catarrhini</taxon>
        <taxon>Hominidae</taxon>
        <taxon>Homo</taxon>
    </lineage>
</organism>